<accession>D4ADY9</accession>
<organism>
    <name type="scientific">Rattus norvegicus</name>
    <name type="common">Rat</name>
    <dbReference type="NCBI Taxonomy" id="10116"/>
    <lineage>
        <taxon>Eukaryota</taxon>
        <taxon>Metazoa</taxon>
        <taxon>Chordata</taxon>
        <taxon>Craniata</taxon>
        <taxon>Vertebrata</taxon>
        <taxon>Euteleostomi</taxon>
        <taxon>Mammalia</taxon>
        <taxon>Eutheria</taxon>
        <taxon>Euarchontoglires</taxon>
        <taxon>Glires</taxon>
        <taxon>Rodentia</taxon>
        <taxon>Myomorpha</taxon>
        <taxon>Muroidea</taxon>
        <taxon>Muridae</taxon>
        <taxon>Murinae</taxon>
        <taxon>Rattus</taxon>
    </lineage>
</organism>
<protein>
    <recommendedName>
        <fullName evidence="2">Very long chain fatty acid elongase 7</fullName>
        <ecNumber evidence="1 2">2.3.1.199</ecNumber>
    </recommendedName>
    <alternativeName>
        <fullName evidence="2">3-keto acyl-CoA synthase Elovl7</fullName>
    </alternativeName>
    <alternativeName>
        <fullName evidence="2">ELOVL fatty acid elongase 7</fullName>
        <shortName evidence="2">ELOVL FA elongase 7</shortName>
    </alternativeName>
    <alternativeName>
        <fullName evidence="2">Elongation of very long chain fatty acids protein 7</fullName>
    </alternativeName>
    <alternativeName>
        <fullName evidence="2">Very long chain 3-ketoacyl-CoA synthase 7</fullName>
    </alternativeName>
    <alternativeName>
        <fullName evidence="2">Very long chain 3-oxoacyl-CoA synthase 7</fullName>
    </alternativeName>
</protein>
<evidence type="ECO:0000250" key="1">
    <source>
        <dbReference type="UniProtKB" id="A1L3X0"/>
    </source>
</evidence>
<evidence type="ECO:0000255" key="2">
    <source>
        <dbReference type="HAMAP-Rule" id="MF_03207"/>
    </source>
</evidence>
<dbReference type="EC" id="2.3.1.199" evidence="1 2"/>
<dbReference type="RefSeq" id="NP_001178773.1">
    <property type="nucleotide sequence ID" value="NM_001191844.1"/>
</dbReference>
<dbReference type="RefSeq" id="XP_038958484.1">
    <property type="nucleotide sequence ID" value="XM_039102556.2"/>
</dbReference>
<dbReference type="SMR" id="D4ADY9"/>
<dbReference type="FunCoup" id="D4ADY9">
    <property type="interactions" value="614"/>
</dbReference>
<dbReference type="STRING" id="10116.ENSRNOP00000014074"/>
<dbReference type="PhosphoSitePlus" id="D4ADY9"/>
<dbReference type="PaxDb" id="10116-ENSRNOP00000014074"/>
<dbReference type="Ensembl" id="ENSRNOT00000014074.6">
    <property type="protein sequence ID" value="ENSRNOP00000014074.5"/>
    <property type="gene ID" value="ENSRNOG00000010450.6"/>
</dbReference>
<dbReference type="GeneID" id="361895"/>
<dbReference type="KEGG" id="rno:361895"/>
<dbReference type="AGR" id="RGD:1310560"/>
<dbReference type="CTD" id="79993"/>
<dbReference type="RGD" id="1310560">
    <property type="gene designation" value="Elovl7"/>
</dbReference>
<dbReference type="eggNOG" id="KOG3071">
    <property type="taxonomic scope" value="Eukaryota"/>
</dbReference>
<dbReference type="GeneTree" id="ENSGT01050000244838"/>
<dbReference type="InParanoid" id="D4ADY9"/>
<dbReference type="OMA" id="EFMQNAD"/>
<dbReference type="OrthoDB" id="434092at2759"/>
<dbReference type="PhylomeDB" id="D4ADY9"/>
<dbReference type="TreeFam" id="TF323454"/>
<dbReference type="Reactome" id="R-RNO-75876">
    <property type="pathway name" value="Synthesis of very long-chain fatty acyl-CoAs"/>
</dbReference>
<dbReference type="UniPathway" id="UPA00094"/>
<dbReference type="PRO" id="PR:D4ADY9"/>
<dbReference type="Proteomes" id="UP000002494">
    <property type="component" value="Chromosome 2"/>
</dbReference>
<dbReference type="GO" id="GO:0005783">
    <property type="term" value="C:endoplasmic reticulum"/>
    <property type="evidence" value="ECO:0000266"/>
    <property type="project" value="RGD"/>
</dbReference>
<dbReference type="GO" id="GO:0005789">
    <property type="term" value="C:endoplasmic reticulum membrane"/>
    <property type="evidence" value="ECO:0000318"/>
    <property type="project" value="GO_Central"/>
</dbReference>
<dbReference type="GO" id="GO:0009922">
    <property type="term" value="F:fatty acid elongase activity"/>
    <property type="evidence" value="ECO:0000266"/>
    <property type="project" value="RGD"/>
</dbReference>
<dbReference type="GO" id="GO:0034625">
    <property type="term" value="P:fatty acid elongation, monounsaturated fatty acid"/>
    <property type="evidence" value="ECO:0000318"/>
    <property type="project" value="GO_Central"/>
</dbReference>
<dbReference type="GO" id="GO:0034626">
    <property type="term" value="P:fatty acid elongation, polyunsaturated fatty acid"/>
    <property type="evidence" value="ECO:0000266"/>
    <property type="project" value="RGD"/>
</dbReference>
<dbReference type="GO" id="GO:0019367">
    <property type="term" value="P:fatty acid elongation, saturated fatty acid"/>
    <property type="evidence" value="ECO:0000266"/>
    <property type="project" value="RGD"/>
</dbReference>
<dbReference type="GO" id="GO:0035338">
    <property type="term" value="P:long-chain fatty-acyl-CoA biosynthetic process"/>
    <property type="evidence" value="ECO:0007669"/>
    <property type="project" value="UniProtKB-UniRule"/>
</dbReference>
<dbReference type="GO" id="GO:0030148">
    <property type="term" value="P:sphingolipid biosynthetic process"/>
    <property type="evidence" value="ECO:0000318"/>
    <property type="project" value="GO_Central"/>
</dbReference>
<dbReference type="GO" id="GO:0006636">
    <property type="term" value="P:unsaturated fatty acid biosynthetic process"/>
    <property type="evidence" value="ECO:0007669"/>
    <property type="project" value="UniProtKB-UniRule"/>
</dbReference>
<dbReference type="GO" id="GO:0042761">
    <property type="term" value="P:very long-chain fatty acid biosynthetic process"/>
    <property type="evidence" value="ECO:0000266"/>
    <property type="project" value="RGD"/>
</dbReference>
<dbReference type="HAMAP" id="MF_03207">
    <property type="entry name" value="VLCF_elongase_7"/>
    <property type="match status" value="1"/>
</dbReference>
<dbReference type="InterPro" id="IPR030457">
    <property type="entry name" value="ELO_CS"/>
</dbReference>
<dbReference type="InterPro" id="IPR002076">
    <property type="entry name" value="ELO_fam"/>
</dbReference>
<dbReference type="InterPro" id="IPR033670">
    <property type="entry name" value="ELOVL7"/>
</dbReference>
<dbReference type="PANTHER" id="PTHR11157:SF118">
    <property type="entry name" value="ELONGATION OF VERY LONG CHAIN FATTY ACIDS PROTEIN 7"/>
    <property type="match status" value="1"/>
</dbReference>
<dbReference type="PANTHER" id="PTHR11157">
    <property type="entry name" value="FATTY ACID ACYL TRANSFERASE-RELATED"/>
    <property type="match status" value="1"/>
</dbReference>
<dbReference type="Pfam" id="PF01151">
    <property type="entry name" value="ELO"/>
    <property type="match status" value="1"/>
</dbReference>
<dbReference type="PROSITE" id="PS01188">
    <property type="entry name" value="ELO"/>
    <property type="match status" value="1"/>
</dbReference>
<sequence>MAFSDLTSRTVRFYDNWIKDADPRVENWLLMSSPLPQTIILGLYVYFVTSLGPKLMENRKPFELKKAMITYNFFIVLFSVYMCYEFVMSGWGTGYSFRCDIVDYSQSPRAMRMVHTCWLYYFSKFIELFDTIFFVLRKKNSQVTFLHVFHHTIMPWTWWFGVKFAAGGLGTFHALLNTAVHVVMYFYYGLCAMGPAYQKYLWWKKHLTSLQLVQFVLVTVHIGQIFFMEDCNYQYPVFLYIIMSYGCIFLLLFLHFWYRAYTKGQRLPKTMENGNCKSKHH</sequence>
<reference key="1">
    <citation type="journal article" date="2004" name="Nature">
        <title>Genome sequence of the Brown Norway rat yields insights into mammalian evolution.</title>
        <authorList>
            <person name="Gibbs R.A."/>
            <person name="Weinstock G.M."/>
            <person name="Metzker M.L."/>
            <person name="Muzny D.M."/>
            <person name="Sodergren E.J."/>
            <person name="Scherer S."/>
            <person name="Scott G."/>
            <person name="Steffen D."/>
            <person name="Worley K.C."/>
            <person name="Burch P.E."/>
            <person name="Okwuonu G."/>
            <person name="Hines S."/>
            <person name="Lewis L."/>
            <person name="Deramo C."/>
            <person name="Delgado O."/>
            <person name="Dugan-Rocha S."/>
            <person name="Miner G."/>
            <person name="Morgan M."/>
            <person name="Hawes A."/>
            <person name="Gill R."/>
            <person name="Holt R.A."/>
            <person name="Adams M.D."/>
            <person name="Amanatides P.G."/>
            <person name="Baden-Tillson H."/>
            <person name="Barnstead M."/>
            <person name="Chin S."/>
            <person name="Evans C.A."/>
            <person name="Ferriera S."/>
            <person name="Fosler C."/>
            <person name="Glodek A."/>
            <person name="Gu Z."/>
            <person name="Jennings D."/>
            <person name="Kraft C.L."/>
            <person name="Nguyen T."/>
            <person name="Pfannkoch C.M."/>
            <person name="Sitter C."/>
            <person name="Sutton G.G."/>
            <person name="Venter J.C."/>
            <person name="Woodage T."/>
            <person name="Smith D."/>
            <person name="Lee H.-M."/>
            <person name="Gustafson E."/>
            <person name="Cahill P."/>
            <person name="Kana A."/>
            <person name="Doucette-Stamm L."/>
            <person name="Weinstock K."/>
            <person name="Fechtel K."/>
            <person name="Weiss R.B."/>
            <person name="Dunn D.M."/>
            <person name="Green E.D."/>
            <person name="Blakesley R.W."/>
            <person name="Bouffard G.G."/>
            <person name="De Jong P.J."/>
            <person name="Osoegawa K."/>
            <person name="Zhu B."/>
            <person name="Marra M."/>
            <person name="Schein J."/>
            <person name="Bosdet I."/>
            <person name="Fjell C."/>
            <person name="Jones S."/>
            <person name="Krzywinski M."/>
            <person name="Mathewson C."/>
            <person name="Siddiqui A."/>
            <person name="Wye N."/>
            <person name="McPherson J."/>
            <person name="Zhao S."/>
            <person name="Fraser C.M."/>
            <person name="Shetty J."/>
            <person name="Shatsman S."/>
            <person name="Geer K."/>
            <person name="Chen Y."/>
            <person name="Abramzon S."/>
            <person name="Nierman W.C."/>
            <person name="Havlak P.H."/>
            <person name="Chen R."/>
            <person name="Durbin K.J."/>
            <person name="Egan A."/>
            <person name="Ren Y."/>
            <person name="Song X.-Z."/>
            <person name="Li B."/>
            <person name="Liu Y."/>
            <person name="Qin X."/>
            <person name="Cawley S."/>
            <person name="Cooney A.J."/>
            <person name="D'Souza L.M."/>
            <person name="Martin K."/>
            <person name="Wu J.Q."/>
            <person name="Gonzalez-Garay M.L."/>
            <person name="Jackson A.R."/>
            <person name="Kalafus K.J."/>
            <person name="McLeod M.P."/>
            <person name="Milosavljevic A."/>
            <person name="Virk D."/>
            <person name="Volkov A."/>
            <person name="Wheeler D.A."/>
            <person name="Zhang Z."/>
            <person name="Bailey J.A."/>
            <person name="Eichler E.E."/>
            <person name="Tuzun E."/>
            <person name="Birney E."/>
            <person name="Mongin E."/>
            <person name="Ureta-Vidal A."/>
            <person name="Woodwark C."/>
            <person name="Zdobnov E."/>
            <person name="Bork P."/>
            <person name="Suyama M."/>
            <person name="Torrents D."/>
            <person name="Alexandersson M."/>
            <person name="Trask B.J."/>
            <person name="Young J.M."/>
            <person name="Huang H."/>
            <person name="Wang H."/>
            <person name="Xing H."/>
            <person name="Daniels S."/>
            <person name="Gietzen D."/>
            <person name="Schmidt J."/>
            <person name="Stevens K."/>
            <person name="Vitt U."/>
            <person name="Wingrove J."/>
            <person name="Camara F."/>
            <person name="Mar Alba M."/>
            <person name="Abril J.F."/>
            <person name="Guigo R."/>
            <person name="Smit A."/>
            <person name="Dubchak I."/>
            <person name="Rubin E.M."/>
            <person name="Couronne O."/>
            <person name="Poliakov A."/>
            <person name="Huebner N."/>
            <person name="Ganten D."/>
            <person name="Goesele C."/>
            <person name="Hummel O."/>
            <person name="Kreitler T."/>
            <person name="Lee Y.-A."/>
            <person name="Monti J."/>
            <person name="Schulz H."/>
            <person name="Zimdahl H."/>
            <person name="Himmelbauer H."/>
            <person name="Lehrach H."/>
            <person name="Jacob H.J."/>
            <person name="Bromberg S."/>
            <person name="Gullings-Handley J."/>
            <person name="Jensen-Seaman M.I."/>
            <person name="Kwitek A.E."/>
            <person name="Lazar J."/>
            <person name="Pasko D."/>
            <person name="Tonellato P.J."/>
            <person name="Twigger S."/>
            <person name="Ponting C.P."/>
            <person name="Duarte J.M."/>
            <person name="Rice S."/>
            <person name="Goodstadt L."/>
            <person name="Beatson S.A."/>
            <person name="Emes R.D."/>
            <person name="Winter E.E."/>
            <person name="Webber C."/>
            <person name="Brandt P."/>
            <person name="Nyakatura G."/>
            <person name="Adetobi M."/>
            <person name="Chiaromonte F."/>
            <person name="Elnitski L."/>
            <person name="Eswara P."/>
            <person name="Hardison R.C."/>
            <person name="Hou M."/>
            <person name="Kolbe D."/>
            <person name="Makova K."/>
            <person name="Miller W."/>
            <person name="Nekrutenko A."/>
            <person name="Riemer C."/>
            <person name="Schwartz S."/>
            <person name="Taylor J."/>
            <person name="Yang S."/>
            <person name="Zhang Y."/>
            <person name="Lindpaintner K."/>
            <person name="Andrews T.D."/>
            <person name="Caccamo M."/>
            <person name="Clamp M."/>
            <person name="Clarke L."/>
            <person name="Curwen V."/>
            <person name="Durbin R.M."/>
            <person name="Eyras E."/>
            <person name="Searle S.M."/>
            <person name="Cooper G.M."/>
            <person name="Batzoglou S."/>
            <person name="Brudno M."/>
            <person name="Sidow A."/>
            <person name="Stone E.A."/>
            <person name="Payseur B.A."/>
            <person name="Bourque G."/>
            <person name="Lopez-Otin C."/>
            <person name="Puente X.S."/>
            <person name="Chakrabarti K."/>
            <person name="Chatterji S."/>
            <person name="Dewey C."/>
            <person name="Pachter L."/>
            <person name="Bray N."/>
            <person name="Yap V.B."/>
            <person name="Caspi A."/>
            <person name="Tesler G."/>
            <person name="Pevzner P.A."/>
            <person name="Haussler D."/>
            <person name="Roskin K.M."/>
            <person name="Baertsch R."/>
            <person name="Clawson H."/>
            <person name="Furey T.S."/>
            <person name="Hinrichs A.S."/>
            <person name="Karolchik D."/>
            <person name="Kent W.J."/>
            <person name="Rosenbloom K.R."/>
            <person name="Trumbower H."/>
            <person name="Weirauch M."/>
            <person name="Cooper D.N."/>
            <person name="Stenson P.D."/>
            <person name="Ma B."/>
            <person name="Brent M."/>
            <person name="Arumugam M."/>
            <person name="Shteynberg D."/>
            <person name="Copley R.R."/>
            <person name="Taylor M.S."/>
            <person name="Riethman H."/>
            <person name="Mudunuri U."/>
            <person name="Peterson J."/>
            <person name="Guyer M."/>
            <person name="Felsenfeld A."/>
            <person name="Old S."/>
            <person name="Mockrin S."/>
            <person name="Collins F.S."/>
        </authorList>
    </citation>
    <scope>NUCLEOTIDE SEQUENCE [LARGE SCALE GENOMIC DNA]</scope>
    <source>
        <strain>Brown Norway</strain>
    </source>
</reference>
<name>ELOV7_RAT</name>
<proteinExistence type="inferred from homology"/>
<comment type="function">
    <text evidence="2">Catalyzes the first and rate-limiting reaction of the four reactions that constitute the long-chain fatty acids elongation cycle. This endoplasmic reticulum-bound enzymatic process allows the addition of 2 carbons to the chain of long- and very long-chain fatty acids (VLCFAs) per cycle. Condensing enzyme with higher activity toward C18 acyl-CoAs, especially C18:3(n-3) acyl-CoAs and C18:3(n-6)-CoAs. Also active toward C20:4-, C18:0-, C18:1-, C18:2- and C16:0-CoAs, and weakly toward C20:0-CoA. Little or no activity toward C22:0-, C24:0-, or C26:0-CoAs. May participate in the production of saturated and polyunsaturated VLCFAs of different chain lengths that are involved in multiple biological processes as precursors of membrane lipids and lipid mediators.</text>
</comment>
<comment type="catalytic activity">
    <reaction evidence="2">
        <text>a very-long-chain acyl-CoA + malonyl-CoA + H(+) = a very-long-chain 3-oxoacyl-CoA + CO2 + CoA</text>
        <dbReference type="Rhea" id="RHEA:32727"/>
        <dbReference type="ChEBI" id="CHEBI:15378"/>
        <dbReference type="ChEBI" id="CHEBI:16526"/>
        <dbReference type="ChEBI" id="CHEBI:57287"/>
        <dbReference type="ChEBI" id="CHEBI:57384"/>
        <dbReference type="ChEBI" id="CHEBI:90725"/>
        <dbReference type="ChEBI" id="CHEBI:90736"/>
        <dbReference type="EC" id="2.3.1.199"/>
    </reaction>
    <physiologicalReaction direction="left-to-right" evidence="1">
        <dbReference type="Rhea" id="RHEA:32728"/>
    </physiologicalReaction>
</comment>
<comment type="catalytic activity">
    <reaction evidence="1">
        <text>eicosanoyl-CoA + malonyl-CoA + H(+) = 3-oxodocosanoyl-CoA + CO2 + CoA</text>
        <dbReference type="Rhea" id="RHEA:35327"/>
        <dbReference type="ChEBI" id="CHEBI:15378"/>
        <dbReference type="ChEBI" id="CHEBI:16526"/>
        <dbReference type="ChEBI" id="CHEBI:57287"/>
        <dbReference type="ChEBI" id="CHEBI:57380"/>
        <dbReference type="ChEBI" id="CHEBI:57384"/>
        <dbReference type="ChEBI" id="CHEBI:71451"/>
    </reaction>
    <physiologicalReaction direction="left-to-right" evidence="1">
        <dbReference type="Rhea" id="RHEA:35328"/>
    </physiologicalReaction>
</comment>
<comment type="catalytic activity">
    <reaction evidence="1">
        <text>(5Z,8Z,11Z,14Z)-eicosatetraenoyl-CoA + malonyl-CoA + H(+) = (7Z,10Z,13Z,16Z)-3-oxodocosatetraenoyl-CoA + CO2 + CoA</text>
        <dbReference type="Rhea" id="RHEA:36475"/>
        <dbReference type="ChEBI" id="CHEBI:15378"/>
        <dbReference type="ChEBI" id="CHEBI:16526"/>
        <dbReference type="ChEBI" id="CHEBI:57287"/>
        <dbReference type="ChEBI" id="CHEBI:57368"/>
        <dbReference type="ChEBI" id="CHEBI:57384"/>
        <dbReference type="ChEBI" id="CHEBI:73852"/>
    </reaction>
    <physiologicalReaction direction="left-to-right" evidence="1">
        <dbReference type="Rhea" id="RHEA:36476"/>
    </physiologicalReaction>
</comment>
<comment type="catalytic activity">
    <reaction evidence="1">
        <text>(6Z,9Z,12Z)-octadecatrienoyl-CoA + malonyl-CoA + H(+) = (8Z,11Z,14Z)-3-oxoeicosatrienoyl-CoA + CO2 + CoA</text>
        <dbReference type="Rhea" id="RHEA:35379"/>
        <dbReference type="ChEBI" id="CHEBI:15378"/>
        <dbReference type="ChEBI" id="CHEBI:16526"/>
        <dbReference type="ChEBI" id="CHEBI:57287"/>
        <dbReference type="ChEBI" id="CHEBI:57363"/>
        <dbReference type="ChEBI" id="CHEBI:57384"/>
        <dbReference type="ChEBI" id="CHEBI:71481"/>
    </reaction>
    <physiologicalReaction direction="left-to-right" evidence="1">
        <dbReference type="Rhea" id="RHEA:35380"/>
    </physiologicalReaction>
</comment>
<comment type="catalytic activity">
    <reaction evidence="1">
        <text>(9Z,12Z)-octadecadienoyl-CoA + malonyl-CoA + H(+) = (11Z,14Z)-3-oxoicosa-11,14-dienoyl-CoA + CO2 + CoA</text>
        <dbReference type="Rhea" id="RHEA:36503"/>
        <dbReference type="ChEBI" id="CHEBI:15378"/>
        <dbReference type="ChEBI" id="CHEBI:16526"/>
        <dbReference type="ChEBI" id="CHEBI:57287"/>
        <dbReference type="ChEBI" id="CHEBI:57383"/>
        <dbReference type="ChEBI" id="CHEBI:57384"/>
        <dbReference type="ChEBI" id="CHEBI:74012"/>
    </reaction>
    <physiologicalReaction direction="left-to-right" evidence="1">
        <dbReference type="Rhea" id="RHEA:36504"/>
    </physiologicalReaction>
</comment>
<comment type="catalytic activity">
    <reaction evidence="1">
        <text>(9Z)-octadecenoyl-CoA + malonyl-CoA + H(+) = 3-oxo-(11Z)-eicosenoyl-CoA + CO2 + CoA</text>
        <dbReference type="Rhea" id="RHEA:36511"/>
        <dbReference type="ChEBI" id="CHEBI:15378"/>
        <dbReference type="ChEBI" id="CHEBI:16526"/>
        <dbReference type="ChEBI" id="CHEBI:57287"/>
        <dbReference type="ChEBI" id="CHEBI:57384"/>
        <dbReference type="ChEBI" id="CHEBI:57387"/>
        <dbReference type="ChEBI" id="CHEBI:74011"/>
    </reaction>
    <physiologicalReaction direction="left-to-right" evidence="1">
        <dbReference type="Rhea" id="RHEA:36512"/>
    </physiologicalReaction>
</comment>
<comment type="catalytic activity">
    <reaction evidence="1">
        <text>octadecanoyl-CoA + malonyl-CoA + H(+) = 3-oxoeicosanoyl-CoA + CO2 + CoA</text>
        <dbReference type="Rhea" id="RHEA:35319"/>
        <dbReference type="ChEBI" id="CHEBI:15378"/>
        <dbReference type="ChEBI" id="CHEBI:16526"/>
        <dbReference type="ChEBI" id="CHEBI:57287"/>
        <dbReference type="ChEBI" id="CHEBI:57384"/>
        <dbReference type="ChEBI" id="CHEBI:57394"/>
        <dbReference type="ChEBI" id="CHEBI:65115"/>
    </reaction>
    <physiologicalReaction direction="left-to-right" evidence="1">
        <dbReference type="Rhea" id="RHEA:35320"/>
    </physiologicalReaction>
</comment>
<comment type="catalytic activity">
    <reaction evidence="1">
        <text>hexadecanoyl-CoA + malonyl-CoA + H(+) = 3-oxooctadecanoyl-CoA + CO2 + CoA</text>
        <dbReference type="Rhea" id="RHEA:35315"/>
        <dbReference type="ChEBI" id="CHEBI:15378"/>
        <dbReference type="ChEBI" id="CHEBI:16526"/>
        <dbReference type="ChEBI" id="CHEBI:57287"/>
        <dbReference type="ChEBI" id="CHEBI:57379"/>
        <dbReference type="ChEBI" id="CHEBI:57384"/>
        <dbReference type="ChEBI" id="CHEBI:71407"/>
    </reaction>
    <physiologicalReaction direction="left-to-right" evidence="1">
        <dbReference type="Rhea" id="RHEA:35316"/>
    </physiologicalReaction>
</comment>
<comment type="catalytic activity">
    <reaction evidence="1">
        <text>(9Z,12Z,15Z)-octadecatrienoyl-CoA + malonyl-CoA + H(+) = (11Z,14Z,17Z)-3-oxoeicosatrienoyl-CoA + CO2 + CoA</text>
        <dbReference type="Rhea" id="RHEA:36523"/>
        <dbReference type="ChEBI" id="CHEBI:15378"/>
        <dbReference type="ChEBI" id="CHEBI:16526"/>
        <dbReference type="ChEBI" id="CHEBI:57287"/>
        <dbReference type="ChEBI" id="CHEBI:57384"/>
        <dbReference type="ChEBI" id="CHEBI:74034"/>
        <dbReference type="ChEBI" id="CHEBI:74054"/>
    </reaction>
    <physiologicalReaction direction="left-to-right" evidence="1">
        <dbReference type="Rhea" id="RHEA:36524"/>
    </physiologicalReaction>
</comment>
<comment type="pathway">
    <text evidence="2">Lipid metabolism; fatty acid biosynthesis.</text>
</comment>
<comment type="subunit">
    <text evidence="1">Homodimer. Interacts with TECR (By similarity).</text>
</comment>
<comment type="subcellular location">
    <subcellularLocation>
        <location evidence="2">Endoplasmic reticulum membrane</location>
        <topology evidence="2">Multi-pass membrane protein</topology>
    </subcellularLocation>
</comment>
<comment type="domain">
    <text evidence="2">The C-terminal di-lysine motif may confer endoplasmic reticulum localization.</text>
</comment>
<comment type="similarity">
    <text evidence="2">Belongs to the ELO family. ELOVL7 subfamily.</text>
</comment>
<keyword id="KW-0007">Acetylation</keyword>
<keyword id="KW-1015">Disulfide bond</keyword>
<keyword id="KW-0256">Endoplasmic reticulum</keyword>
<keyword id="KW-0275">Fatty acid biosynthesis</keyword>
<keyword id="KW-0276">Fatty acid metabolism</keyword>
<keyword id="KW-0444">Lipid biosynthesis</keyword>
<keyword id="KW-0443">Lipid metabolism</keyword>
<keyword id="KW-0472">Membrane</keyword>
<keyword id="KW-1185">Reference proteome</keyword>
<keyword id="KW-0808">Transferase</keyword>
<keyword id="KW-0812">Transmembrane</keyword>
<keyword id="KW-1133">Transmembrane helix</keyword>
<gene>
    <name evidence="2" type="primary">Elovl7</name>
</gene>
<feature type="initiator methionine" description="Removed" evidence="1">
    <location>
        <position position="1"/>
    </location>
</feature>
<feature type="chain" id="PRO_0000416692" description="Very long chain fatty acid elongase 7">
    <location>
        <begin position="2"/>
        <end position="281"/>
    </location>
</feature>
<feature type="topological domain" description="Lumenal" evidence="1">
    <location>
        <begin position="2"/>
        <end position="27"/>
    </location>
</feature>
<feature type="transmembrane region" description="Helical; Name=1" evidence="2">
    <location>
        <begin position="28"/>
        <end position="48"/>
    </location>
</feature>
<feature type="topological domain" description="Cytoplasmic" evidence="1">
    <location>
        <begin position="49"/>
        <end position="72"/>
    </location>
</feature>
<feature type="transmembrane region" description="Helical; Name=2" evidence="2">
    <location>
        <begin position="73"/>
        <end position="93"/>
    </location>
</feature>
<feature type="topological domain" description="Lumenal" evidence="1">
    <location>
        <begin position="94"/>
        <end position="115"/>
    </location>
</feature>
<feature type="transmembrane region" description="Helical; Name=3" evidence="2">
    <location>
        <begin position="116"/>
        <end position="136"/>
    </location>
</feature>
<feature type="topological domain" description="Cytoplasmic" evidence="1">
    <location>
        <begin position="137"/>
        <end position="142"/>
    </location>
</feature>
<feature type="transmembrane region" description="Helical; Name=4" evidence="2">
    <location>
        <begin position="143"/>
        <end position="162"/>
    </location>
</feature>
<feature type="topological domain" description="Lumenal" evidence="1">
    <location>
        <begin position="163"/>
        <end position="176"/>
    </location>
</feature>
<feature type="transmembrane region" description="Helical; Name=5" evidence="2">
    <location>
        <begin position="177"/>
        <end position="197"/>
    </location>
</feature>
<feature type="topological domain" description="Cytoplasmic" evidence="1">
    <location>
        <begin position="198"/>
        <end position="206"/>
    </location>
</feature>
<feature type="transmembrane region" description="Helical; Name=6" evidence="2">
    <location>
        <begin position="207"/>
        <end position="227"/>
    </location>
</feature>
<feature type="topological domain" description="Lumenal" evidence="1">
    <location>
        <begin position="228"/>
        <end position="236"/>
    </location>
</feature>
<feature type="transmembrane region" description="Helical; Name=7" evidence="2">
    <location>
        <begin position="237"/>
        <end position="257"/>
    </location>
</feature>
<feature type="topological domain" description="Cytoplasmic" evidence="1">
    <location>
        <begin position="258"/>
        <end position="281"/>
    </location>
</feature>
<feature type="short sequence motif" description="HxxHH motif" evidence="1">
    <location>
        <begin position="147"/>
        <end position="151"/>
    </location>
</feature>
<feature type="short sequence motif" description="Di-lysine motif" evidence="2">
    <location>
        <begin position="277"/>
        <end position="281"/>
    </location>
</feature>
<feature type="active site" description="Nucleophile" evidence="1">
    <location>
        <position position="150"/>
    </location>
</feature>
<feature type="binding site" evidence="1">
    <location>
        <position position="124"/>
    </location>
    <ligand>
        <name>3-oxoeicosanoyl-CoA</name>
        <dbReference type="ChEBI" id="CHEBI:65115"/>
    </ligand>
</feature>
<feature type="binding site" evidence="1">
    <location>
        <position position="137"/>
    </location>
    <ligand>
        <name>3-oxoeicosanoyl-CoA</name>
        <dbReference type="ChEBI" id="CHEBI:65115"/>
    </ligand>
</feature>
<feature type="binding site" evidence="1">
    <location>
        <position position="139"/>
    </location>
    <ligand>
        <name>3-oxoeicosanoyl-CoA</name>
        <dbReference type="ChEBI" id="CHEBI:65115"/>
    </ligand>
</feature>
<feature type="binding site" evidence="1">
    <location>
        <position position="142"/>
    </location>
    <ligand>
        <name>3-oxoeicosanoyl-CoA</name>
        <dbReference type="ChEBI" id="CHEBI:65115"/>
    </ligand>
</feature>
<feature type="binding site" evidence="1">
    <location>
        <position position="147"/>
    </location>
    <ligand>
        <name>3-oxoeicosanoyl-CoA</name>
        <dbReference type="ChEBI" id="CHEBI:65115"/>
    </ligand>
</feature>
<feature type="binding site" evidence="1">
    <location>
        <position position="187"/>
    </location>
    <ligand>
        <name>3-oxoeicosanoyl-CoA</name>
        <dbReference type="ChEBI" id="CHEBI:65115"/>
    </ligand>
</feature>
<feature type="binding site" evidence="1">
    <location>
        <position position="204"/>
    </location>
    <ligand>
        <name>3-oxoeicosanoyl-CoA</name>
        <dbReference type="ChEBI" id="CHEBI:65115"/>
    </ligand>
</feature>
<feature type="binding site" evidence="1">
    <location>
        <position position="208"/>
    </location>
    <ligand>
        <name>3-oxoeicosanoyl-CoA</name>
        <dbReference type="ChEBI" id="CHEBI:65115"/>
    </ligand>
</feature>
<feature type="binding site" evidence="1">
    <location>
        <position position="211"/>
    </location>
    <ligand>
        <name>3-oxoeicosanoyl-CoA</name>
        <dbReference type="ChEBI" id="CHEBI:65115"/>
    </ligand>
</feature>
<feature type="binding site" evidence="1">
    <location>
        <position position="266"/>
    </location>
    <ligand>
        <name>3-oxoeicosanoyl-CoA</name>
        <dbReference type="ChEBI" id="CHEBI:65115"/>
    </ligand>
</feature>
<feature type="modified residue" description="N-acetylalanine" evidence="1">
    <location>
        <position position="2"/>
    </location>
</feature>
<feature type="disulfide bond" evidence="1">
    <location>
        <begin position="99"/>
        <end position="231"/>
    </location>
</feature>